<gene>
    <name type="primary">TNNI3</name>
    <name type="synonym">TNNC1</name>
</gene>
<comment type="function">
    <text>Troponin I is the inhibitory subunit of troponin, the thin filament regulatory complex which confers calcium-sensitivity to striated muscle actomyosin ATPase activity.</text>
</comment>
<comment type="subunit">
    <text evidence="5 12 14">Binds to actin and tropomyosin. Interacts with TRIM63. Interacts with STK4/MST1.</text>
</comment>
<comment type="interaction">
    <interactant intactId="EBI-704146">
        <id>P19429</id>
    </interactant>
    <interactant intactId="EBI-10194381">
        <id>P05014</id>
        <label>IFNA4</label>
    </interactant>
    <organismsDiffer>false</organismsDiffer>
    <experiments>2</experiments>
</comment>
<comment type="interaction">
    <interactant intactId="EBI-704146">
        <id>P19429</id>
    </interactant>
    <interactant intactId="EBI-10769071">
        <id>Q5VU43-11</id>
        <label>PDE4DIP</label>
    </interactant>
    <organismsDiffer>false</organismsDiffer>
    <experiments>4</experiments>
</comment>
<comment type="interaction">
    <interactant intactId="EBI-704146">
        <id>P19429</id>
    </interactant>
    <interactant intactId="EBI-988601">
        <id>O43933</id>
        <label>PEX1</label>
    </interactant>
    <organismsDiffer>false</organismsDiffer>
    <experiments>3</experiments>
</comment>
<comment type="interaction">
    <interactant intactId="EBI-704146">
        <id>P19429</id>
    </interactant>
    <interactant intactId="EBI-6912267">
        <id>A6NK89</id>
        <label>RASSF10</label>
    </interactant>
    <organismsDiffer>false</organismsDiffer>
    <experiments>3</experiments>
</comment>
<comment type="interaction">
    <interactant intactId="EBI-704146">
        <id>P19429</id>
    </interactant>
    <interactant intactId="EBI-10762111">
        <id>Q9UKA8-1</id>
        <label>RCAN3</label>
    </interactant>
    <organismsDiffer>false</organismsDiffer>
    <experiments>3</experiments>
</comment>
<comment type="interaction">
    <interactant intactId="EBI-704146">
        <id>P19429</id>
    </interactant>
    <interactant intactId="EBI-10762136">
        <id>Q9UKA8-4</id>
        <label>RCAN3</label>
    </interactant>
    <organismsDiffer>false</organismsDiffer>
    <experiments>2</experiments>
</comment>
<comment type="interaction">
    <interactant intactId="EBI-704146">
        <id>P19429</id>
    </interactant>
    <interactant intactId="EBI-3906339">
        <id>P63316</id>
        <label>TNNC1</label>
    </interactant>
    <organismsDiffer>false</organismsDiffer>
    <experiments>5</experiments>
</comment>
<comment type="interaction">
    <interactant intactId="EBI-704146">
        <id>P19429</id>
    </interactant>
    <interactant intactId="EBI-10249681">
        <id>P02585</id>
        <label>TNNC2</label>
    </interactant>
    <organismsDiffer>false</organismsDiffer>
    <experiments>3</experiments>
</comment>
<comment type="interaction">
    <interactant intactId="EBI-704146">
        <id>P19429</id>
    </interactant>
    <interactant intactId="EBI-704142">
        <id>Q59H18</id>
        <label>TNNI3K</label>
    </interactant>
    <organismsDiffer>false</organismsDiffer>
    <experiments>2</experiments>
</comment>
<comment type="interaction">
    <interactant intactId="EBI-704146">
        <id>P19429</id>
    </interactant>
    <interactant intactId="EBI-10762055">
        <id>Q59H18-2</id>
        <label>TNNI3K</label>
    </interactant>
    <organismsDiffer>false</organismsDiffer>
    <experiments>2</experiments>
</comment>
<comment type="interaction">
    <interactant intactId="EBI-704146">
        <id>P19429</id>
    </interactant>
    <interactant intactId="EBI-720609">
        <id>O76024</id>
        <label>WFS1</label>
    </interactant>
    <organismsDiffer>false</organismsDiffer>
    <experiments>3</experiments>
</comment>
<comment type="PTM">
    <text evidence="1 6 11 14 17 18 20">Phosphorylated at Ser-42 and Ser-44 by PRKCE; phosphorylation increases myocardium contractile dysfunction (By similarity). Phosphorylated at Ser-23 and Ser-24 by PRKD1; phosphorylation reduces myofilament calcium sensitivity. Phosphorylated preferentially at Thr-31. Phosphorylation by STK4/MST1 alters its binding affinity to TNNC1 (cardiac Tn-C) and TNNT2 (cardiac Tn-T).</text>
</comment>
<comment type="disease" evidence="4 8 9 13 19">
    <disease id="DI-00237">
        <name>Cardiomyopathy, familial hypertrophic, 7</name>
        <acronym>CMH7</acronym>
        <description>A hereditary heart disorder characterized by ventricular hypertrophy, which is usually asymmetric and often involves the interventricular septum. The symptoms include dyspnea, syncope, collapse, palpitations, and chest pain. They can be readily provoked by exercise. The disorder has inter- and intrafamilial variability ranging from benign to malignant forms with high risk of cardiac failure and sudden cardiac death.</description>
        <dbReference type="MIM" id="613690"/>
    </disease>
    <text>The disease is caused by variants affecting the gene represented in this entry.</text>
</comment>
<comment type="disease" evidence="7">
    <disease id="DI-00246">
        <name>Cardiomyopathy, familial restrictive 1</name>
        <acronym>RCM1</acronym>
        <description>A heart disorder characterized by impaired filling of the ventricles with reduced diastolic volume, in the presence of normal or near normal wall thickness and systolic function.</description>
        <dbReference type="MIM" id="115210"/>
    </disease>
    <text>The disease is caused by variants affecting the gene represented in this entry.</text>
</comment>
<comment type="disease" evidence="15 16">
    <disease id="DI-00229">
        <name>Cardiomyopathy, dilated, 2A</name>
        <acronym>CMD2A</acronym>
        <description>A disorder characterized by ventricular dilation and impaired systolic function, resulting in congestive heart failure and arrhythmia. Patients are at risk of premature death.</description>
        <dbReference type="MIM" id="611880"/>
    </disease>
    <text>The disease is caused by variants affecting the gene represented in this entry.</text>
</comment>
<comment type="disease" evidence="15 16">
    <disease id="DI-02681">
        <name>Cardiomyopathy, dilated, 1FF</name>
        <acronym>CMD1FF</acronym>
        <description>A disorder characterized by ventricular dilation and impaired systolic function, resulting in congestive heart failure and arrhythmia. Patients are at risk of premature death.</description>
        <dbReference type="MIM" id="613286"/>
    </disease>
    <text>The disease is caused by variants affecting the gene represented in this entry.</text>
</comment>
<comment type="similarity">
    <text evidence="21">Belongs to the troponin I family.</text>
</comment>
<feature type="initiator methionine" description="Removed" evidence="17">
    <location>
        <position position="1"/>
    </location>
</feature>
<feature type="chain" id="PRO_0000186151" description="Troponin I, cardiac muscle">
    <location>
        <begin position="2"/>
        <end position="210"/>
    </location>
</feature>
<feature type="region of interest" description="Disordered" evidence="3">
    <location>
        <begin position="1"/>
        <end position="43"/>
    </location>
</feature>
<feature type="region of interest" description="Involved in binding TNC">
    <location>
        <begin position="32"/>
        <end position="79"/>
    </location>
</feature>
<feature type="region of interest" description="Involved in binding TNC and actin">
    <location>
        <begin position="129"/>
        <end position="149"/>
    </location>
</feature>
<feature type="site" description="Involved in TNI-TNT interactions">
    <location>
        <position position="80"/>
    </location>
</feature>
<feature type="site" description="Involved in TNI-TNT interactions">
    <location>
        <position position="97"/>
    </location>
</feature>
<feature type="modified residue" description="N-acetylalanine" evidence="17">
    <location>
        <position position="2"/>
    </location>
</feature>
<feature type="modified residue" description="Phosphoserine" evidence="18">
    <location>
        <position position="5"/>
    </location>
</feature>
<feature type="modified residue" description="Phosphoserine" evidence="18">
    <location>
        <position position="6"/>
    </location>
</feature>
<feature type="modified residue" description="Phosphoserine; by PKA and PKD/PRKD1" evidence="11 17 18 20">
    <location>
        <position position="23"/>
    </location>
</feature>
<feature type="modified residue" description="Phosphoserine; by PKA and PKD/PRKD1" evidence="11 17 18 20">
    <location>
        <position position="24"/>
    </location>
</feature>
<feature type="modified residue" description="Phosphotyrosine" evidence="18">
    <location>
        <position position="26"/>
    </location>
</feature>
<feature type="modified residue" description="Phosphothreonine; by STK4/MST1" evidence="14">
    <location>
        <position position="31"/>
    </location>
</feature>
<feature type="modified residue" description="Phosphoserine; by PKC/PRKCE" evidence="2">
    <location>
        <position position="42"/>
    </location>
</feature>
<feature type="modified residue" description="Phosphoserine; by PKC/PRKCE" evidence="2">
    <location>
        <position position="44"/>
    </location>
</feature>
<feature type="modified residue" description="Phosphothreonine; by STK4/MST1" evidence="14 18">
    <location>
        <position position="51"/>
    </location>
</feature>
<feature type="modified residue" description="Phosphoserine" evidence="18">
    <location>
        <position position="77"/>
    </location>
</feature>
<feature type="modified residue" description="Phosphothreonine" evidence="18">
    <location>
        <position position="78"/>
    </location>
</feature>
<feature type="modified residue" description="Phosphothreonine; by STK4/MST1" evidence="14">
    <location>
        <position position="129"/>
    </location>
</feature>
<feature type="modified residue" description="Phosphothreonine; by STK4/MST1" evidence="14 18">
    <location>
        <position position="143"/>
    </location>
</feature>
<feature type="modified residue" description="Phosphoserine; by PAK3" evidence="6">
    <location>
        <position position="150"/>
    </location>
</feature>
<feature type="modified residue" description="Phosphoserine" evidence="18">
    <location>
        <position position="166"/>
    </location>
</feature>
<feature type="modified residue" description="Phosphothreonine" evidence="18">
    <location>
        <position position="181"/>
    </location>
</feature>
<feature type="modified residue" description="Phosphoserine" evidence="18">
    <location>
        <position position="199"/>
    </location>
</feature>
<feature type="sequence variant" id="VAR_043989" description="In CMD2A; dbSNP:rs397516359." evidence="10">
    <original>A</original>
    <variation>V</variation>
    <location>
        <position position="2"/>
    </location>
</feature>
<feature type="sequence variant" id="VAR_063548" description="In CMD1FF; dbSNP:rs267607130." evidence="15">
    <original>K</original>
    <variation>Q</variation>
    <location>
        <position position="36"/>
    </location>
</feature>
<feature type="sequence variant" id="VAR_029453" description="In dbSNP:rs3729712.">
    <original>R</original>
    <variation>C</variation>
    <location>
        <position position="79"/>
    </location>
</feature>
<feature type="sequence variant" id="VAR_016078" description="Risk factor for CMH7; dbSNP:rs77615401." evidence="4">
    <original>P</original>
    <variation>S</variation>
    <location>
        <position position="82"/>
    </location>
</feature>
<feature type="sequence variant" id="VAR_067264" description="In CMD1FF; dbSNP:rs777177571." evidence="16">
    <original>A</original>
    <variation>G</variation>
    <location>
        <position position="116"/>
    </location>
</feature>
<feature type="sequence variant" id="VAR_019872" description="In CMH7; dbSNP:rs397516347." evidence="8">
    <original>R</original>
    <variation>Q</variation>
    <location>
        <position position="141"/>
    </location>
</feature>
<feature type="sequence variant" id="VAR_016079" description="In RCM1; dbSNP:rs121917760." evidence="7">
    <original>L</original>
    <variation>Q</variation>
    <location>
        <position position="144"/>
    </location>
</feature>
<feature type="sequence variant" id="VAR_007603" description="In CMH7; dbSNP:rs104894724." evidence="19">
    <original>R</original>
    <variation>G</variation>
    <location>
        <position position="145"/>
    </location>
</feature>
<feature type="sequence variant" id="VAR_016080" description="In RCM1; dbSNP:rs104894724." evidence="7">
    <original>R</original>
    <variation>W</variation>
    <location>
        <position position="145"/>
    </location>
</feature>
<feature type="sequence variant" id="VAR_019873" description="In CMH7; dbSNP:rs397516353." evidence="8">
    <original>A</original>
    <variation>V</variation>
    <location>
        <position position="157"/>
    </location>
</feature>
<feature type="sequence variant" id="VAR_019874" description="In CMH7; dbSNP:rs397516354." evidence="8 13">
    <original>R</original>
    <variation>P</variation>
    <location>
        <position position="162"/>
    </location>
</feature>
<feature type="sequence variant" id="VAR_042745" description="In CMH7; dbSNP:rs397516354." evidence="13">
    <original>R</original>
    <variation>Q</variation>
    <location>
        <position position="162"/>
    </location>
</feature>
<feature type="sequence variant" id="VAR_029454" description="In CMH7; dbSNP:rs727504242." evidence="9">
    <original>S</original>
    <variation>F</variation>
    <location>
        <position position="166"/>
    </location>
</feature>
<feature type="sequence variant" id="VAR_016081" description="In RCM1; dbSNP:rs121917761." evidence="7">
    <original>A</original>
    <variation>T</variation>
    <location>
        <position position="171"/>
    </location>
</feature>
<feature type="sequence variant" id="VAR_019875" description="In CMH7." evidence="8">
    <location>
        <position position="177"/>
    </location>
</feature>
<feature type="sequence variant" id="VAR_016082" description="In RCM1; dbSNP:rs104894730." evidence="7">
    <original>K</original>
    <variation>E</variation>
    <location>
        <position position="178"/>
    </location>
</feature>
<feature type="sequence variant" id="VAR_063549" description="In CMD1FF; dbSNP:rs267607129." evidence="15">
    <original>N</original>
    <variation>K</variation>
    <location>
        <position position="185"/>
    </location>
</feature>
<feature type="sequence variant" id="VAR_019876" description="In CMH7; dbSNP:rs397516357." evidence="8">
    <original>R</original>
    <variation>Q</variation>
    <location>
        <position position="186"/>
    </location>
</feature>
<feature type="sequence variant" id="VAR_016083" description="In CMH7 and RCM1." evidence="7">
    <original>D</original>
    <variation>H</variation>
    <location>
        <position position="190"/>
    </location>
</feature>
<feature type="sequence variant" id="VAR_016084" description="In RCM1; dbSNP:rs104894729." evidence="7">
    <original>R</original>
    <variation>H</variation>
    <location>
        <position position="192"/>
    </location>
</feature>
<feature type="sequence variant" id="VAR_016085" description="In CMH7; dbSNP:rs104894727." evidence="4 8">
    <original>D</original>
    <variation>N</variation>
    <location>
        <position position="196"/>
    </location>
</feature>
<feature type="sequence variant" id="VAR_042746" description="In CMH7; dbSNP:rs727504275." evidence="13">
    <original>R</original>
    <variation>H</variation>
    <location>
        <position position="204"/>
    </location>
</feature>
<feature type="sequence variant" id="VAR_007604" description="In CMH7; dbSNP:rs104894725." evidence="19">
    <original>K</original>
    <variation>Q</variation>
    <location>
        <position position="206"/>
    </location>
</feature>
<feature type="helix" evidence="25">
    <location>
        <begin position="43"/>
        <end position="50"/>
    </location>
</feature>
<feature type="helix" evidence="22">
    <location>
        <begin position="85"/>
        <end position="87"/>
    </location>
</feature>
<feature type="helix" evidence="23">
    <location>
        <begin position="90"/>
        <end position="136"/>
    </location>
</feature>
<feature type="helix" evidence="24">
    <location>
        <begin position="140"/>
        <end position="159"/>
    </location>
</feature>
<feature type="helix" evidence="23">
    <location>
        <begin position="160"/>
        <end position="162"/>
    </location>
</feature>
<feature type="helix" evidence="22">
    <location>
        <begin position="163"/>
        <end position="188"/>
    </location>
</feature>
<name>TNNI3_HUMAN</name>
<sequence>MADGSSDAAREPRPAPAPIRRRSSNYRAYATEPHAKKKSKISASRKLQLKTLLLQIAKQELEREAEERRGEKGRALSTRCQPLELAGLGFAELQDLCRQLHARVDKVDEERYDIEAKVTKNITEIADLTQKIFDLRGKFKRPTLRRVRISADAMMQALLGARAKESLDLRAHLKQVKKEDTEKENREVGDWRKNIDALSGMEGRKKKFES</sequence>
<organism>
    <name type="scientific">Homo sapiens</name>
    <name type="common">Human</name>
    <dbReference type="NCBI Taxonomy" id="9606"/>
    <lineage>
        <taxon>Eukaryota</taxon>
        <taxon>Metazoa</taxon>
        <taxon>Chordata</taxon>
        <taxon>Craniata</taxon>
        <taxon>Vertebrata</taxon>
        <taxon>Euteleostomi</taxon>
        <taxon>Mammalia</taxon>
        <taxon>Eutheria</taxon>
        <taxon>Euarchontoglires</taxon>
        <taxon>Primates</taxon>
        <taxon>Haplorrhini</taxon>
        <taxon>Catarrhini</taxon>
        <taxon>Hominidae</taxon>
        <taxon>Homo</taxon>
    </lineage>
</organism>
<accession>P19429</accession>
<protein>
    <recommendedName>
        <fullName>Troponin I, cardiac muscle</fullName>
    </recommendedName>
    <alternativeName>
        <fullName>Cardiac troponin I</fullName>
    </alternativeName>
</protein>
<keyword id="KW-0002">3D-structure</keyword>
<keyword id="KW-0007">Acetylation</keyword>
<keyword id="KW-0009">Actin-binding</keyword>
<keyword id="KW-0122">Cardiomyopathy</keyword>
<keyword id="KW-0903">Direct protein sequencing</keyword>
<keyword id="KW-0225">Disease variant</keyword>
<keyword id="KW-0514">Muscle protein</keyword>
<keyword id="KW-0597">Phosphoprotein</keyword>
<keyword id="KW-1267">Proteomics identification</keyword>
<keyword id="KW-1185">Reference proteome</keyword>
<dbReference type="EMBL" id="X54163">
    <property type="protein sequence ID" value="CAA38102.1"/>
    <property type="molecule type" value="mRNA"/>
</dbReference>
<dbReference type="EMBL" id="M64247">
    <property type="protein sequence ID" value="AAA16157.1"/>
    <property type="molecule type" value="mRNA"/>
</dbReference>
<dbReference type="EMBL" id="X90780">
    <property type="protein sequence ID" value="CAA62301.1"/>
    <property type="molecule type" value="Genomic_DNA"/>
</dbReference>
<dbReference type="CCDS" id="CCDS42628.1"/>
<dbReference type="PIR" id="A61229">
    <property type="entry name" value="TPHUIC"/>
</dbReference>
<dbReference type="RefSeq" id="NP_000354.4">
    <property type="nucleotide sequence ID" value="NM_000363.4"/>
</dbReference>
<dbReference type="PDB" id="1J1D">
    <property type="method" value="X-ray"/>
    <property type="resolution" value="2.61 A"/>
    <property type="chains" value="C/F=31-163"/>
</dbReference>
<dbReference type="PDB" id="1J1E">
    <property type="method" value="X-ray"/>
    <property type="resolution" value="3.30 A"/>
    <property type="chains" value="C/F=31-210"/>
</dbReference>
<dbReference type="PDB" id="1LXF">
    <property type="method" value="NMR"/>
    <property type="chains" value="I=148-164"/>
</dbReference>
<dbReference type="PDB" id="1MXL">
    <property type="method" value="NMR"/>
    <property type="chains" value="I=148-164"/>
</dbReference>
<dbReference type="PDB" id="1OZS">
    <property type="method" value="NMR"/>
    <property type="chains" value="B=129-148"/>
</dbReference>
<dbReference type="PDB" id="2KGB">
    <property type="method" value="NMR"/>
    <property type="chains" value="I=145-164"/>
</dbReference>
<dbReference type="PDB" id="2KRD">
    <property type="method" value="NMR"/>
    <property type="chains" value="I=148-164"/>
</dbReference>
<dbReference type="PDB" id="2L1R">
    <property type="method" value="NMR"/>
    <property type="chains" value="B=145-164"/>
</dbReference>
<dbReference type="PDB" id="2MZP">
    <property type="method" value="NMR"/>
    <property type="chains" value="I=145-171"/>
</dbReference>
<dbReference type="PDB" id="2N7L">
    <property type="method" value="NMR"/>
    <property type="chains" value="C=145-174"/>
</dbReference>
<dbReference type="PDB" id="4Y99">
    <property type="method" value="X-ray"/>
    <property type="resolution" value="2.00 A"/>
    <property type="chains" value="C=1-210"/>
</dbReference>
<dbReference type="PDB" id="5VLN">
    <property type="method" value="NMR"/>
    <property type="chains" value="A=139-164"/>
</dbReference>
<dbReference type="PDB" id="5W88">
    <property type="method" value="NMR"/>
    <property type="chains" value="A=133-164"/>
</dbReference>
<dbReference type="PDB" id="5WCL">
    <property type="method" value="NMR"/>
    <property type="chains" value="A=139-164"/>
</dbReference>
<dbReference type="PDB" id="6KN7">
    <property type="method" value="EM"/>
    <property type="resolution" value="6.60 A"/>
    <property type="chains" value="U/b=41-210"/>
</dbReference>
<dbReference type="PDB" id="6KN8">
    <property type="method" value="EM"/>
    <property type="resolution" value="4.80 A"/>
    <property type="chains" value="U/b=41-166"/>
</dbReference>
<dbReference type="PDB" id="6MV3">
    <property type="method" value="NMR"/>
    <property type="chains" value="A=139-164"/>
</dbReference>
<dbReference type="PDB" id="7JGI">
    <property type="method" value="NMR"/>
    <property type="chains" value="A=139-164"/>
</dbReference>
<dbReference type="PDB" id="7SC2">
    <property type="method" value="X-ray"/>
    <property type="resolution" value="1.81 A"/>
    <property type="chains" value="A=139-164"/>
</dbReference>
<dbReference type="PDB" id="7SC3">
    <property type="method" value="X-ray"/>
    <property type="resolution" value="2.23 A"/>
    <property type="chains" value="A=139-164"/>
</dbReference>
<dbReference type="PDB" id="7SUP">
    <property type="method" value="NMR"/>
    <property type="chains" value="A=147-180"/>
</dbReference>
<dbReference type="PDB" id="7SVC">
    <property type="method" value="NMR"/>
    <property type="chains" value="A=147-180"/>
</dbReference>
<dbReference type="PDB" id="7SWG">
    <property type="method" value="NMR"/>
    <property type="chains" value="A=147-180"/>
</dbReference>
<dbReference type="PDB" id="7SWI">
    <property type="method" value="NMR"/>
    <property type="chains" value="A=147-180"/>
</dbReference>
<dbReference type="PDB" id="7SXC">
    <property type="method" value="NMR"/>
    <property type="chains" value="A=147-180"/>
</dbReference>
<dbReference type="PDB" id="7SXD">
    <property type="method" value="NMR"/>
    <property type="chains" value="A=147-180"/>
</dbReference>
<dbReference type="PDB" id="7UH9">
    <property type="method" value="NMR"/>
    <property type="chains" value="A=139-164"/>
</dbReference>
<dbReference type="PDB" id="7UHA">
    <property type="method" value="NMR"/>
    <property type="chains" value="A=139-164"/>
</dbReference>
<dbReference type="PDB" id="7UTI">
    <property type="method" value="EM"/>
    <property type="resolution" value="4.80 A"/>
    <property type="chains" value="V/a=1-210"/>
</dbReference>
<dbReference type="PDB" id="7UTL">
    <property type="method" value="EM"/>
    <property type="resolution" value="6.60 A"/>
    <property type="chains" value="V/c=1-210"/>
</dbReference>
<dbReference type="PDB" id="8DZV">
    <property type="method" value="X-ray"/>
    <property type="resolution" value="1.20 A"/>
    <property type="chains" value="C=40-52"/>
</dbReference>
<dbReference type="PDB" id="8FMM">
    <property type="method" value="X-ray"/>
    <property type="resolution" value="3.11 A"/>
    <property type="chains" value="C/F=32-166"/>
</dbReference>
<dbReference type="PDB" id="8FMN">
    <property type="method" value="X-ray"/>
    <property type="resolution" value="3.10 A"/>
    <property type="chains" value="C/F=32-166"/>
</dbReference>
<dbReference type="PDB" id="8FMO">
    <property type="method" value="X-ray"/>
    <property type="resolution" value="2.61 A"/>
    <property type="chains" value="C/F=32-166"/>
</dbReference>
<dbReference type="PDB" id="8FMP">
    <property type="method" value="X-ray"/>
    <property type="resolution" value="3.24 A"/>
    <property type="chains" value="C/F=32-166"/>
</dbReference>
<dbReference type="PDB" id="8FMQ">
    <property type="method" value="X-ray"/>
    <property type="resolution" value="3.25 A"/>
    <property type="chains" value="C/F=32-166"/>
</dbReference>
<dbReference type="PDB" id="8FMR">
    <property type="method" value="X-ray"/>
    <property type="resolution" value="3.24 A"/>
    <property type="chains" value="C/F=32-166"/>
</dbReference>
<dbReference type="PDB" id="8FMS">
    <property type="method" value="X-ray"/>
    <property type="resolution" value="3.44 A"/>
    <property type="chains" value="C/F=32-166"/>
</dbReference>
<dbReference type="PDB" id="8FMT">
    <property type="method" value="X-ray"/>
    <property type="resolution" value="2.80 A"/>
    <property type="chains" value="C/F=32-166"/>
</dbReference>
<dbReference type="PDBsum" id="1J1D"/>
<dbReference type="PDBsum" id="1J1E"/>
<dbReference type="PDBsum" id="1LXF"/>
<dbReference type="PDBsum" id="1MXL"/>
<dbReference type="PDBsum" id="1OZS"/>
<dbReference type="PDBsum" id="2KGB"/>
<dbReference type="PDBsum" id="2KRD"/>
<dbReference type="PDBsum" id="2L1R"/>
<dbReference type="PDBsum" id="2MZP"/>
<dbReference type="PDBsum" id="2N7L"/>
<dbReference type="PDBsum" id="4Y99"/>
<dbReference type="PDBsum" id="5VLN"/>
<dbReference type="PDBsum" id="5W88"/>
<dbReference type="PDBsum" id="5WCL"/>
<dbReference type="PDBsum" id="6KN7"/>
<dbReference type="PDBsum" id="6KN8"/>
<dbReference type="PDBsum" id="6MV3"/>
<dbReference type="PDBsum" id="7JGI"/>
<dbReference type="PDBsum" id="7SC2"/>
<dbReference type="PDBsum" id="7SC3"/>
<dbReference type="PDBsum" id="7SUP"/>
<dbReference type="PDBsum" id="7SVC"/>
<dbReference type="PDBsum" id="7SWG"/>
<dbReference type="PDBsum" id="7SWI"/>
<dbReference type="PDBsum" id="7SXC"/>
<dbReference type="PDBsum" id="7SXD"/>
<dbReference type="PDBsum" id="7UH9"/>
<dbReference type="PDBsum" id="7UHA"/>
<dbReference type="PDBsum" id="7UTI"/>
<dbReference type="PDBsum" id="7UTL"/>
<dbReference type="PDBsum" id="8DZV"/>
<dbReference type="PDBsum" id="8FMM"/>
<dbReference type="PDBsum" id="8FMN"/>
<dbReference type="PDBsum" id="8FMO"/>
<dbReference type="PDBsum" id="8FMP"/>
<dbReference type="PDBsum" id="8FMQ"/>
<dbReference type="PDBsum" id="8FMR"/>
<dbReference type="PDBsum" id="8FMS"/>
<dbReference type="PDBsum" id="8FMT"/>
<dbReference type="BMRB" id="P19429"/>
<dbReference type="EMDB" id="EMD-0728"/>
<dbReference type="EMDB" id="EMD-0729"/>
<dbReference type="SMR" id="P19429"/>
<dbReference type="BioGRID" id="112991">
    <property type="interactions" value="20"/>
</dbReference>
<dbReference type="ComplexPortal" id="CPX-3280">
    <property type="entry name" value="Cardiac Troponin complex"/>
</dbReference>
<dbReference type="CORUM" id="P19429"/>
<dbReference type="DIP" id="DIP-34065N"/>
<dbReference type="FunCoup" id="P19429">
    <property type="interactions" value="388"/>
</dbReference>
<dbReference type="IntAct" id="P19429">
    <property type="interactions" value="23"/>
</dbReference>
<dbReference type="MINT" id="P19429"/>
<dbReference type="STRING" id="9606.ENSP00000341838"/>
<dbReference type="ChEMBL" id="CHEMBL2095202"/>
<dbReference type="DrugBank" id="DB04513">
    <property type="generic name" value="N-(6-Aminohexyl)-5-Chloro-1-Naphthalenesulfonamide"/>
</dbReference>
<dbReference type="GlyGen" id="P19429">
    <property type="glycosylation" value="6 sites, 1 O-linked glycan (1 site)"/>
</dbReference>
<dbReference type="iPTMnet" id="P19429"/>
<dbReference type="PhosphoSitePlus" id="P19429"/>
<dbReference type="BioMuta" id="TNNI3"/>
<dbReference type="DMDM" id="136213"/>
<dbReference type="MassIVE" id="P19429"/>
<dbReference type="PaxDb" id="9606-ENSP00000341838"/>
<dbReference type="PeptideAtlas" id="P19429"/>
<dbReference type="ProteomicsDB" id="53658"/>
<dbReference type="ABCD" id="P19429">
    <property type="antibodies" value="8 sequenced antibodies"/>
</dbReference>
<dbReference type="Antibodypedia" id="4354">
    <property type="antibodies" value="2619 antibodies from 52 providers"/>
</dbReference>
<dbReference type="CPTC" id="P19429">
    <property type="antibodies" value="1 antibody"/>
</dbReference>
<dbReference type="DNASU" id="7137"/>
<dbReference type="Ensembl" id="ENST00000344887.10">
    <property type="protein sequence ID" value="ENSP00000341838.5"/>
    <property type="gene ID" value="ENSG00000129991.14"/>
</dbReference>
<dbReference type="GeneID" id="7137"/>
<dbReference type="KEGG" id="hsa:7137"/>
<dbReference type="MANE-Select" id="ENST00000344887.10">
    <property type="protein sequence ID" value="ENSP00000341838.5"/>
    <property type="RefSeq nucleotide sequence ID" value="NM_000363.5"/>
    <property type="RefSeq protein sequence ID" value="NP_000354.4"/>
</dbReference>
<dbReference type="AGR" id="HGNC:11947"/>
<dbReference type="CTD" id="7137"/>
<dbReference type="DisGeNET" id="7137"/>
<dbReference type="GeneCards" id="TNNI3"/>
<dbReference type="GeneReviews" id="TNNI3"/>
<dbReference type="HGNC" id="HGNC:11947">
    <property type="gene designation" value="TNNI3"/>
</dbReference>
<dbReference type="HPA" id="ENSG00000129991">
    <property type="expression patterns" value="Tissue enriched (heart)"/>
</dbReference>
<dbReference type="MalaCards" id="TNNI3"/>
<dbReference type="MIM" id="115210">
    <property type="type" value="phenotype"/>
</dbReference>
<dbReference type="MIM" id="191044">
    <property type="type" value="gene"/>
</dbReference>
<dbReference type="MIM" id="611880">
    <property type="type" value="phenotype"/>
</dbReference>
<dbReference type="MIM" id="613286">
    <property type="type" value="phenotype"/>
</dbReference>
<dbReference type="MIM" id="613690">
    <property type="type" value="phenotype"/>
</dbReference>
<dbReference type="neXtProt" id="NX_P19429"/>
<dbReference type="OpenTargets" id="ENSG00000129991"/>
<dbReference type="Orphanet" id="154">
    <property type="disease" value="Familial isolated dilated cardiomyopathy"/>
</dbReference>
<dbReference type="Orphanet" id="75249">
    <property type="disease" value="Familial isolated restrictive cardiomyopathy"/>
</dbReference>
<dbReference type="PharmGKB" id="PA36636"/>
<dbReference type="VEuPathDB" id="HostDB:ENSG00000129991"/>
<dbReference type="eggNOG" id="KOG3977">
    <property type="taxonomic scope" value="Eukaryota"/>
</dbReference>
<dbReference type="GeneTree" id="ENSGT01030000234588"/>
<dbReference type="InParanoid" id="P19429"/>
<dbReference type="OrthoDB" id="371899at2759"/>
<dbReference type="PAN-GO" id="P19429">
    <property type="GO annotations" value="3 GO annotations based on evolutionary models"/>
</dbReference>
<dbReference type="PhylomeDB" id="P19429"/>
<dbReference type="TreeFam" id="TF313374"/>
<dbReference type="PathwayCommons" id="P19429"/>
<dbReference type="Reactome" id="R-HSA-390522">
    <property type="pathway name" value="Striated Muscle Contraction"/>
</dbReference>
<dbReference type="Reactome" id="R-HSA-5578775">
    <property type="pathway name" value="Ion homeostasis"/>
</dbReference>
<dbReference type="SignaLink" id="P19429"/>
<dbReference type="SIGNOR" id="P19429"/>
<dbReference type="BioGRID-ORCS" id="7137">
    <property type="hits" value="18 hits in 1156 CRISPR screens"/>
</dbReference>
<dbReference type="ChiTaRS" id="TNNI3">
    <property type="organism name" value="human"/>
</dbReference>
<dbReference type="EvolutionaryTrace" id="P19429"/>
<dbReference type="GeneWiki" id="TNNI3"/>
<dbReference type="GenomeRNAi" id="7137"/>
<dbReference type="Pharos" id="P19429">
    <property type="development level" value="Tbio"/>
</dbReference>
<dbReference type="PRO" id="PR:P19429"/>
<dbReference type="Proteomes" id="UP000005640">
    <property type="component" value="Chromosome 19"/>
</dbReference>
<dbReference type="RNAct" id="P19429">
    <property type="molecule type" value="protein"/>
</dbReference>
<dbReference type="Bgee" id="ENSG00000129991">
    <property type="expression patterns" value="Expressed in apex of heart and 101 other cell types or tissues"/>
</dbReference>
<dbReference type="ExpressionAtlas" id="P19429">
    <property type="expression patterns" value="baseline and differential"/>
</dbReference>
<dbReference type="GO" id="GO:0097512">
    <property type="term" value="C:cardiac myofibril"/>
    <property type="evidence" value="ECO:0000315"/>
    <property type="project" value="CAFA"/>
</dbReference>
<dbReference type="GO" id="GO:1990584">
    <property type="term" value="C:cardiac Troponin complex"/>
    <property type="evidence" value="ECO:0000315"/>
    <property type="project" value="CAFA"/>
</dbReference>
<dbReference type="GO" id="GO:0005829">
    <property type="term" value="C:cytosol"/>
    <property type="evidence" value="ECO:0000304"/>
    <property type="project" value="Reactome"/>
</dbReference>
<dbReference type="GO" id="GO:0030017">
    <property type="term" value="C:sarcomere"/>
    <property type="evidence" value="ECO:0000304"/>
    <property type="project" value="BHF-UCL"/>
</dbReference>
<dbReference type="GO" id="GO:0005861">
    <property type="term" value="C:troponin complex"/>
    <property type="evidence" value="ECO:0000314"/>
    <property type="project" value="UniProtKB"/>
</dbReference>
<dbReference type="GO" id="GO:0003779">
    <property type="term" value="F:actin binding"/>
    <property type="evidence" value="ECO:0000314"/>
    <property type="project" value="UniProtKB"/>
</dbReference>
<dbReference type="GO" id="GO:0051015">
    <property type="term" value="F:actin filament binding"/>
    <property type="evidence" value="ECO:0000353"/>
    <property type="project" value="CAFA"/>
</dbReference>
<dbReference type="GO" id="GO:0019855">
    <property type="term" value="F:calcium channel inhibitor activity"/>
    <property type="evidence" value="ECO:0000353"/>
    <property type="project" value="UniProtKB"/>
</dbReference>
<dbReference type="GO" id="GO:0048306">
    <property type="term" value="F:calcium-dependent protein binding"/>
    <property type="evidence" value="ECO:0000353"/>
    <property type="project" value="UniProtKB"/>
</dbReference>
<dbReference type="GO" id="GO:0019904">
    <property type="term" value="F:protein domain specific binding"/>
    <property type="evidence" value="ECO:0000353"/>
    <property type="project" value="UniProtKB"/>
</dbReference>
<dbReference type="GO" id="GO:0019901">
    <property type="term" value="F:protein kinase binding"/>
    <property type="evidence" value="ECO:0000353"/>
    <property type="project" value="UniProtKB"/>
</dbReference>
<dbReference type="GO" id="GO:0030172">
    <property type="term" value="F:troponin C binding"/>
    <property type="evidence" value="ECO:0000353"/>
    <property type="project" value="UniProtKB"/>
</dbReference>
<dbReference type="GO" id="GO:0031014">
    <property type="term" value="F:troponin T binding"/>
    <property type="evidence" value="ECO:0000353"/>
    <property type="project" value="UniProtKB"/>
</dbReference>
<dbReference type="GO" id="GO:0060048">
    <property type="term" value="P:cardiac muscle contraction"/>
    <property type="evidence" value="ECO:0000315"/>
    <property type="project" value="UniProtKB"/>
</dbReference>
<dbReference type="GO" id="GO:0060047">
    <property type="term" value="P:heart contraction"/>
    <property type="evidence" value="ECO:0000315"/>
    <property type="project" value="UniProtKB"/>
</dbReference>
<dbReference type="GO" id="GO:0007507">
    <property type="term" value="P:heart development"/>
    <property type="evidence" value="ECO:0000250"/>
    <property type="project" value="UniProtKB"/>
</dbReference>
<dbReference type="GO" id="GO:0006874">
    <property type="term" value="P:intracellular calcium ion homeostasis"/>
    <property type="evidence" value="ECO:0000250"/>
    <property type="project" value="UniProtKB"/>
</dbReference>
<dbReference type="GO" id="GO:0030049">
    <property type="term" value="P:muscle filament sliding"/>
    <property type="evidence" value="ECO:0000303"/>
    <property type="project" value="ComplexPortal"/>
</dbReference>
<dbReference type="GO" id="GO:0032780">
    <property type="term" value="P:negative regulation of ATP-dependent activity"/>
    <property type="evidence" value="ECO:0000314"/>
    <property type="project" value="UniProtKB"/>
</dbReference>
<dbReference type="GO" id="GO:0010882">
    <property type="term" value="P:regulation of cardiac muscle contraction by calcium ion signaling"/>
    <property type="evidence" value="ECO:0000315"/>
    <property type="project" value="CAFA"/>
</dbReference>
<dbReference type="GO" id="GO:0006940">
    <property type="term" value="P:regulation of smooth muscle contraction"/>
    <property type="evidence" value="ECO:0007669"/>
    <property type="project" value="Ensembl"/>
</dbReference>
<dbReference type="GO" id="GO:0001980">
    <property type="term" value="P:regulation of systemic arterial blood pressure by ischemic conditions"/>
    <property type="evidence" value="ECO:0000250"/>
    <property type="project" value="UniProtKB"/>
</dbReference>
<dbReference type="GO" id="GO:0003009">
    <property type="term" value="P:skeletal muscle contraction"/>
    <property type="evidence" value="ECO:0000318"/>
    <property type="project" value="GO_Central"/>
</dbReference>
<dbReference type="GO" id="GO:0001570">
    <property type="term" value="P:vasculogenesis"/>
    <property type="evidence" value="ECO:0000250"/>
    <property type="project" value="UniProtKB"/>
</dbReference>
<dbReference type="GO" id="GO:0055010">
    <property type="term" value="P:ventricular cardiac muscle tissue morphogenesis"/>
    <property type="evidence" value="ECO:0000315"/>
    <property type="project" value="HGNC-UCL"/>
</dbReference>
<dbReference type="DisProt" id="DP00166"/>
<dbReference type="FunFam" id="1.20.5.350:FF:000002">
    <property type="entry name" value="troponin I, fast skeletal muscle"/>
    <property type="match status" value="1"/>
</dbReference>
<dbReference type="Gene3D" id="1.20.5.350">
    <property type="match status" value="1"/>
</dbReference>
<dbReference type="Gene3D" id="6.10.250.180">
    <property type="match status" value="1"/>
</dbReference>
<dbReference type="InterPro" id="IPR001978">
    <property type="entry name" value="Troponin"/>
</dbReference>
<dbReference type="InterPro" id="IPR021666">
    <property type="entry name" value="Troponin-I_N"/>
</dbReference>
<dbReference type="InterPro" id="IPR050875">
    <property type="entry name" value="Troponin_I"/>
</dbReference>
<dbReference type="InterPro" id="IPR038077">
    <property type="entry name" value="Troponin_sf"/>
</dbReference>
<dbReference type="PANTHER" id="PTHR13738">
    <property type="entry name" value="TROPONIN I"/>
    <property type="match status" value="1"/>
</dbReference>
<dbReference type="PANTHER" id="PTHR13738:SF2">
    <property type="entry name" value="TROPONIN I, CARDIAC MUSCLE"/>
    <property type="match status" value="1"/>
</dbReference>
<dbReference type="Pfam" id="PF00992">
    <property type="entry name" value="Troponin"/>
    <property type="match status" value="1"/>
</dbReference>
<dbReference type="Pfam" id="PF11636">
    <property type="entry name" value="Troponin-I_N"/>
    <property type="match status" value="1"/>
</dbReference>
<dbReference type="SUPFAM" id="SSF90250">
    <property type="entry name" value="Troponin coil-coiled subunits"/>
    <property type="match status" value="1"/>
</dbReference>
<reference key="1">
    <citation type="journal article" date="1990" name="FEBS Lett.">
        <title>Molecular cloning of human cardiac troponin I using polymerase chain reaction.</title>
        <authorList>
            <person name="Vallins W.J."/>
            <person name="Brand N.J."/>
            <person name="Dabhade N."/>
            <person name="Butler-Browne G."/>
            <person name="Yacoub M.H."/>
            <person name="Barton P.J.R."/>
        </authorList>
    </citation>
    <scope>NUCLEOTIDE SEQUENCE [MRNA]</scope>
    <source>
        <tissue>Heart muscle</tissue>
    </source>
</reference>
<reference key="2">
    <citation type="journal article" date="1993" name="Gene">
        <title>Cloning and expression in Escherichia coli of the cDNA encoding human cardiac troponin I.</title>
        <authorList>
            <person name="Armour K.L."/>
            <person name="Harris W.J."/>
            <person name="Tempest P.R."/>
        </authorList>
    </citation>
    <scope>SEQUENCE REVISION TO 85</scope>
    <scope>NUCLEOTIDE SEQUENCE [MRNA]</scope>
</reference>
<reference key="3">
    <citation type="journal article" date="1991" name="Circ. Res.">
        <title>Troponin I isoform expression in human heart.</title>
        <authorList>
            <person name="Hunkeler N.M."/>
            <person name="Kullman J."/>
            <person name="Murphy A.M."/>
        </authorList>
    </citation>
    <scope>NUCLEOTIDE SEQUENCE [MRNA]</scope>
</reference>
<reference key="4">
    <citation type="journal article" date="1996" name="Genomics">
        <title>Isolation and characterization of the human cardiac troponin I gene (TNNI3).</title>
        <authorList>
            <person name="Bhavsar P.K."/>
            <person name="Brand N.J."/>
            <person name="Yacoub M.H."/>
            <person name="Barton P.J.R."/>
        </authorList>
    </citation>
    <scope>NUCLEOTIDE SEQUENCE [GENOMIC DNA]</scope>
</reference>
<reference key="5">
    <citation type="journal article" date="1990" name="FEBS Lett.">
        <title>A common motif of two adjacent phosphoserines in bovine, rabbit and human cardiac troponin I.</title>
        <authorList>
            <person name="Mittmann K."/>
            <person name="Jaquet K."/>
            <person name="Heilmeyer L.M.G. Jr."/>
        </authorList>
    </citation>
    <scope>PROTEIN SEQUENCE OF 11-36</scope>
    <scope>ACETYLATION AT ALA-2</scope>
    <scope>PHOSPHORYLATION AT SER-23 AND SER-24</scope>
</reference>
<reference key="6">
    <citation type="journal article" date="1997" name="Eur. J. Biochem.">
        <title>The ordered phosphorylation of cardiac troponin I by the cAMP-dependent protein kinase -- structural consequences and functional implications.</title>
        <authorList>
            <person name="Keane N.E."/>
            <person name="Quirk P.G."/>
            <person name="Gao Y."/>
            <person name="Patchell V.B."/>
            <person name="Perry S.V."/>
            <person name="Levine B.A."/>
        </authorList>
    </citation>
    <scope>PHOSPHORYLATION AT SER-23 AND SER-24</scope>
</reference>
<reference key="7">
    <citation type="journal article" date="2002" name="Circ. Res.">
        <title>p21-activated kinase increases the calcium sensitivity of rat triton-skinned cardiac muscle fiber bundles via a mechanism potentially involving novel phosphorylation of troponin I.</title>
        <authorList>
            <person name="Buscemi N."/>
            <person name="Foster D.B."/>
            <person name="Neverova I."/>
            <person name="Van Eyk J.E."/>
        </authorList>
    </citation>
    <scope>PHOSPHORYLATION AT SER-150 BY PAK3</scope>
</reference>
<reference key="8">
    <citation type="journal article" date="2004" name="Circ. Res.">
        <title>Protein kinase D is a novel mediator of cardiac troponin I phosphorylation and regulates myofilament function.</title>
        <authorList>
            <person name="Haworth R.S."/>
            <person name="Cuello F."/>
            <person name="Herron T.J."/>
            <person name="Franzen G."/>
            <person name="Kentish J.C."/>
            <person name="Gautel M."/>
            <person name="Avkiran M."/>
        </authorList>
    </citation>
    <scope>PHOSPHORYLATION AT SER-23 AND SER-24</scope>
</reference>
<reference key="9">
    <citation type="journal article" date="2004" name="Proc. Natl. Acad. Sci. U.S.A.">
        <title>Muscle-specific RING finger 1 is a bona fide ubiquitin ligase that degrades cardiac troponin I.</title>
        <authorList>
            <person name="Kedar V."/>
            <person name="McDonough H."/>
            <person name="Arya R."/>
            <person name="Li H.-H."/>
            <person name="Rockman H.A."/>
            <person name="Patterson C."/>
        </authorList>
    </citation>
    <scope>INTERACTION WITH TRIM63</scope>
</reference>
<reference key="10">
    <citation type="journal article" date="2009" name="Biochem. J.">
        <title>Phosphorylation of cardiac troponin I by mammalian sterile 20-like kinase 1.</title>
        <authorList>
            <person name="You B."/>
            <person name="Yan G."/>
            <person name="Zhang Z."/>
            <person name="Yan L."/>
            <person name="Li J."/>
            <person name="Ge Q."/>
            <person name="Jin J.P."/>
            <person name="Sun J."/>
        </authorList>
    </citation>
    <scope>INTERACTION WITH STK4/MST1</scope>
    <scope>PHOSPHORYLATION AT THR-31; THR-51; THR-129 AND THR-143</scope>
</reference>
<reference key="11">
    <citation type="journal article" date="2012" name="Circulation">
        <title>Multiple reaction monitoring to identify site-specific troponin I phosphorylated residues in the failing human heart.</title>
        <authorList>
            <person name="Zhang P."/>
            <person name="Kirk J.A."/>
            <person name="Ji W."/>
            <person name="dos Remedios C.G."/>
            <person name="Kass D.A."/>
            <person name="Van Eyk J.E."/>
            <person name="Murphy A.M."/>
        </authorList>
    </citation>
    <scope>PHOSPHORYLATION AT SER-5; SER-6; SER-23; SER-24; TYR-26; SER-42; SER-44; THR-51; SER-77; THR-78; THR-143; SER-166; THR-181 AND SER-199</scope>
</reference>
<reference key="12">
    <citation type="journal article" date="1999" name="Biochemistry">
        <title>Binding of cardiac troponin-I147-163 induces a structural opening in human cardiac troponin-C.</title>
        <authorList>
            <person name="Li M.X."/>
            <person name="Spyracopoulos L."/>
            <person name="Sykes B.D."/>
        </authorList>
    </citation>
    <scope>STRUCTURE BY NMR OF 148-164</scope>
</reference>
<reference key="13">
    <citation type="journal article" date="2002" name="J. Biol. Chem.">
        <title>Structure of the regulatory N-domain of human cardiac troponin C in complex with human cardiac troponin I147-163 and bepridil.</title>
        <authorList>
            <person name="Wang X."/>
            <person name="Li M.X."/>
            <person name="Sykes B.D."/>
        </authorList>
    </citation>
    <scope>STRUCTURE BY NMR OF 149-165 IN COMPLEX WITH CARDIAC TROPONIN C</scope>
</reference>
<reference key="14">
    <citation type="journal article" date="1997" name="Nat. Genet.">
        <title>Mutations in the cardiac troponin I gene associated with hypertrophic cardiomyopathy.</title>
        <authorList>
            <person name="Kimura A."/>
            <person name="Harada H."/>
            <person name="Park J.-E."/>
            <person name="Nishi H."/>
            <person name="Satoh M."/>
            <person name="Takahashi M."/>
            <person name="Hiroi S."/>
            <person name="Sasaoka T."/>
            <person name="Ohbuchi N."/>
            <person name="Nakamura T."/>
            <person name="Koyanagi T."/>
            <person name="Hwang T.-H."/>
            <person name="Choo J."/>
            <person name="Chung K.-S."/>
            <person name="Hasegawa A."/>
            <person name="Nagai R."/>
            <person name="Okazaki O."/>
            <person name="Nakamura H."/>
            <person name="Matsuzaki M."/>
            <person name="Sakamoto T."/>
            <person name="Toshima H."/>
            <person name="Koga Y."/>
            <person name="Imaizumi T."/>
            <person name="Sasazuki T."/>
        </authorList>
    </citation>
    <scope>VARIANTS CMH7 GLY-145 AND GLN-206</scope>
</reference>
<reference key="15">
    <citation type="journal article" date="2002" name="Circulation">
        <title>Sarcomere protein gene mutations in hypertrophic cardiomyopathy of the elderly.</title>
        <authorList>
            <person name="Niimura H."/>
            <person name="Patton K.K."/>
            <person name="McKenna W.J."/>
            <person name="Soults J."/>
            <person name="Maron B.J."/>
            <person name="Seidman J.G."/>
            <person name="Seidman C.E."/>
        </authorList>
    </citation>
    <scope>VARIANT CMH7 ASN-196</scope>
    <scope>VARIANT SER-82</scope>
</reference>
<reference key="16">
    <citation type="journal article" date="2003" name="J. Clin. Invest.">
        <title>Idiopathic restrictive cardiomyopathy is part of the clinical expression of cardiac troponin I mutations.</title>
        <authorList>
            <person name="Mogensen J."/>
            <person name="Kubo T."/>
            <person name="Duque M."/>
            <person name="Uribe W."/>
            <person name="Shaw A."/>
            <person name="Murphy R."/>
            <person name="Gimeno J.R."/>
            <person name="Elliott P."/>
            <person name="McKenna W.J."/>
        </authorList>
    </citation>
    <scope>VARIANTS RCM1 GLN-144; TRP-145; THR-171; GLU-178; HIS-190 AND HIS-192</scope>
</reference>
<reference key="17">
    <citation type="journal article" date="2003" name="Circulation">
        <title>Hypertrophic cardiomyopathy: distribution of disease genes, spectrum of mutations, and implications for a molecular diagnosis strategy.</title>
        <authorList>
            <person name="Richard P."/>
            <person name="Charron P."/>
            <person name="Carrier L."/>
            <person name="Ledeuil C."/>
            <person name="Cheav T."/>
            <person name="Pichereau C."/>
            <person name="Benaiche A."/>
            <person name="Isnard R."/>
            <person name="Dubourg O."/>
            <person name="Burban M."/>
            <person name="Gueffet J.-P."/>
            <person name="Millaire A."/>
            <person name="Desnos M."/>
            <person name="Schwartz K."/>
            <person name="Hainque B."/>
            <person name="Komajda M."/>
        </authorList>
    </citation>
    <scope>VARIANTS CMH7 GLN-141; VAL-157; PRO-162; LYS-177 DEL; GLN-186 AND ASN-196</scope>
</reference>
<reference key="18">
    <citation type="journal article" date="2004" name="Circulation">
        <authorList>
            <person name="Richard P."/>
            <person name="Charron P."/>
            <person name="Carrier L."/>
            <person name="Ledeuil C."/>
            <person name="Cheav T."/>
            <person name="Pichereau C."/>
            <person name="Benaiche A."/>
            <person name="Isnard R."/>
            <person name="Dubourg O."/>
            <person name="Burban M."/>
            <person name="Gueffet J.-P."/>
            <person name="Millaire A."/>
            <person name="Desnos M."/>
            <person name="Schwartz K."/>
            <person name="Hainque B."/>
            <person name="Komajda M."/>
        </authorList>
    </citation>
    <scope>ERRATUM OF PUBMED:12707239</scope>
</reference>
<reference key="19">
    <citation type="journal article" date="2003" name="Clin. Genet.">
        <title>Mutation spectrum in a large cohort of unrelated consecutive patients with hypertrophic cardiomyopathy.</title>
        <authorList>
            <person name="Erdmann J."/>
            <person name="Daehmlow S."/>
            <person name="Wischke S."/>
            <person name="Senyuva M."/>
            <person name="Werner U."/>
            <person name="Raible J."/>
            <person name="Tanis N."/>
            <person name="Dyachenko S."/>
            <person name="Hummel M."/>
            <person name="Hetzer R."/>
            <person name="Regitz-Zagrosek V."/>
        </authorList>
    </citation>
    <scope>VARIANT CMH7 PHE-166</scope>
</reference>
<reference key="20">
    <citation type="journal article" date="2004" name="Lancet">
        <title>Novel mutation in cardiac troponin I in recessive idiopathic dilated cardiomyopathy.</title>
        <authorList>
            <person name="Murphy R.T."/>
            <person name="Mogensen J."/>
            <person name="Shaw A."/>
            <person name="Kubo T."/>
            <person name="Hughes S."/>
            <person name="McKenna W.J."/>
        </authorList>
    </citation>
    <scope>VARIANT CMD2A VAL-2</scope>
</reference>
<reference key="21">
    <citation type="journal article" date="2005" name="J. Med. Genet.">
        <title>Compound and double mutations in patients with hypertrophic cardiomyopathy: implications for genetic testing and counselling.</title>
        <authorList>
            <person name="Ingles J."/>
            <person name="Doolan A."/>
            <person name="Chiu C."/>
            <person name="Seidman J."/>
            <person name="Seidman C."/>
            <person name="Semsarian C."/>
        </authorList>
    </citation>
    <scope>VARIANTS CMH7 PRO-162; GLN-162 AND HIS-204</scope>
</reference>
<reference key="22">
    <citation type="journal article" date="2009" name="Circ. Res.">
        <title>Identification and functional characterization of cardiac troponin I as a novel disease gene in autosomal dominant dilated cardiomyopathy.</title>
        <authorList>
            <person name="Carballo S."/>
            <person name="Robinson P."/>
            <person name="Otway R."/>
            <person name="Fatkin D."/>
            <person name="Jongbloed J.D."/>
            <person name="de Jonge N."/>
            <person name="Blair E."/>
            <person name="van Tintelen J.P."/>
            <person name="Redwood C."/>
            <person name="Watkins H."/>
        </authorList>
    </citation>
    <scope>VARIANTS CMD1FF GLN-36 AND LYS-185</scope>
</reference>
<reference key="23">
    <citation type="journal article" date="2011" name="Eur. J. Med. Genet.">
        <title>Clinical and mutational spectrum in a cohort of 105 unrelated patients with dilated cardiomyopathy.</title>
        <authorList>
            <person name="Millat G."/>
            <person name="Bouvagnet P."/>
            <person name="Chevalier P."/>
            <person name="Sebbag L."/>
            <person name="Dulac A."/>
            <person name="Dauphin C."/>
            <person name="Jouk P.S."/>
            <person name="Delrue M.A."/>
            <person name="Thambo J.B."/>
            <person name="Le Metayer P."/>
            <person name="Seronde M.F."/>
            <person name="Faivre L."/>
            <person name="Eicher J.C."/>
            <person name="Rousson R."/>
        </authorList>
    </citation>
    <scope>VARIANT CMD1FF GLY-116</scope>
</reference>
<evidence type="ECO:0000250" key="1"/>
<evidence type="ECO:0000250" key="2">
    <source>
        <dbReference type="UniProtKB" id="P48787"/>
    </source>
</evidence>
<evidence type="ECO:0000256" key="3">
    <source>
        <dbReference type="SAM" id="MobiDB-lite"/>
    </source>
</evidence>
<evidence type="ECO:0000269" key="4">
    <source>
    </source>
</evidence>
<evidence type="ECO:0000269" key="5">
    <source>
    </source>
</evidence>
<evidence type="ECO:0000269" key="6">
    <source>
    </source>
</evidence>
<evidence type="ECO:0000269" key="7">
    <source>
    </source>
</evidence>
<evidence type="ECO:0000269" key="8">
    <source>
    </source>
</evidence>
<evidence type="ECO:0000269" key="9">
    <source>
    </source>
</evidence>
<evidence type="ECO:0000269" key="10">
    <source>
    </source>
</evidence>
<evidence type="ECO:0000269" key="11">
    <source>
    </source>
</evidence>
<evidence type="ECO:0000269" key="12">
    <source>
    </source>
</evidence>
<evidence type="ECO:0000269" key="13">
    <source>
    </source>
</evidence>
<evidence type="ECO:0000269" key="14">
    <source>
    </source>
</evidence>
<evidence type="ECO:0000269" key="15">
    <source>
    </source>
</evidence>
<evidence type="ECO:0000269" key="16">
    <source>
    </source>
</evidence>
<evidence type="ECO:0000269" key="17">
    <source>
    </source>
</evidence>
<evidence type="ECO:0000269" key="18">
    <source>
    </source>
</evidence>
<evidence type="ECO:0000269" key="19">
    <source>
    </source>
</evidence>
<evidence type="ECO:0000269" key="20">
    <source>
    </source>
</evidence>
<evidence type="ECO:0000305" key="21"/>
<evidence type="ECO:0007829" key="22">
    <source>
        <dbReference type="PDB" id="1J1E"/>
    </source>
</evidence>
<evidence type="ECO:0007829" key="23">
    <source>
        <dbReference type="PDB" id="4Y99"/>
    </source>
</evidence>
<evidence type="ECO:0007829" key="24">
    <source>
        <dbReference type="PDB" id="7SC2"/>
    </source>
</evidence>
<evidence type="ECO:0007829" key="25">
    <source>
        <dbReference type="PDB" id="8DZV"/>
    </source>
</evidence>
<proteinExistence type="evidence at protein level"/>